<name>GPMI_VIBC1</name>
<evidence type="ECO:0000255" key="1">
    <source>
        <dbReference type="HAMAP-Rule" id="MF_01038"/>
    </source>
</evidence>
<protein>
    <recommendedName>
        <fullName evidence="1">2,3-bisphosphoglycerate-independent phosphoglycerate mutase</fullName>
        <shortName evidence="1">BPG-independent PGAM</shortName>
        <shortName evidence="1">Phosphoglyceromutase</shortName>
        <shortName evidence="1">iPGM</shortName>
        <ecNumber evidence="1">5.4.2.12</ecNumber>
    </recommendedName>
</protein>
<organism>
    <name type="scientific">Vibrio campbellii (strain ATCC BAA-1116)</name>
    <dbReference type="NCBI Taxonomy" id="2902295"/>
    <lineage>
        <taxon>Bacteria</taxon>
        <taxon>Pseudomonadati</taxon>
        <taxon>Pseudomonadota</taxon>
        <taxon>Gammaproteobacteria</taxon>
        <taxon>Vibrionales</taxon>
        <taxon>Vibrionaceae</taxon>
        <taxon>Vibrio</taxon>
    </lineage>
</organism>
<accession>A7MX70</accession>
<sequence>MSAKKPLALVILDGYGYREDTASNAIANAKTPVMDALIANNPNTLISASGMDVGLPDGQMGNSEVGHTNIGAGRVVYQDLTRITKSIADGEFAETAALVEAIDSAVKAEKAVHIMGLMSPGGVHSHEDHIYAAVEMAAARGAEKIYLHCFLDGRDTPPRSAENSLQRFQDLFAKLGKGRVASLVGRYYAMDRDNNWDRVQVAYDLLTQAKAEFTAETAVAGLEAAYAREENDEFVKATAIKAEGQEDAIMQDGDAVIFMNYRADRARQITRAFVPAFDGFERAVFPAINFVMLTQYAADIPLAIAFPPASLENTYGEWLSKQGQTQLRISETEKYAHVTFFFNGGIENEFEGEERQLVASPKVATYDMQPEMSSPELTEKMVAAIKSGKYDTIICNYPNADMVGHTGVYEAAEQAIEALDESVGKVVEAIKEVSGQMLITADHGNAEMMIDPETGGVHTAHTNLPVPLIYVGDKAVEFKEGGKLSDLAPTMLSLAGLEIPAEMSGEVLVK</sequence>
<reference key="1">
    <citation type="submission" date="2007-08" db="EMBL/GenBank/DDBJ databases">
        <authorList>
            <consortium name="The Vibrio harveyi Genome Sequencing Project"/>
            <person name="Bassler B."/>
            <person name="Clifton S.W."/>
            <person name="Fulton L."/>
            <person name="Delehaunty K."/>
            <person name="Fronick C."/>
            <person name="Harrison M."/>
            <person name="Markivic C."/>
            <person name="Fulton R."/>
            <person name="Tin-Wollam A.-M."/>
            <person name="Shah N."/>
            <person name="Pepin K."/>
            <person name="Nash W."/>
            <person name="Thiruvilangam P."/>
            <person name="Bhonagiri V."/>
            <person name="Waters C."/>
            <person name="Tu K.C."/>
            <person name="Irgon J."/>
            <person name="Wilson R.K."/>
        </authorList>
    </citation>
    <scope>NUCLEOTIDE SEQUENCE [LARGE SCALE GENOMIC DNA]</scope>
    <source>
        <strain>ATCC BAA-1116 / BB120</strain>
    </source>
</reference>
<comment type="function">
    <text evidence="1">Catalyzes the interconversion of 2-phosphoglycerate and 3-phosphoglycerate.</text>
</comment>
<comment type="catalytic activity">
    <reaction evidence="1">
        <text>(2R)-2-phosphoglycerate = (2R)-3-phosphoglycerate</text>
        <dbReference type="Rhea" id="RHEA:15901"/>
        <dbReference type="ChEBI" id="CHEBI:58272"/>
        <dbReference type="ChEBI" id="CHEBI:58289"/>
        <dbReference type="EC" id="5.4.2.12"/>
    </reaction>
</comment>
<comment type="cofactor">
    <cofactor evidence="1">
        <name>Mn(2+)</name>
        <dbReference type="ChEBI" id="CHEBI:29035"/>
    </cofactor>
    <text evidence="1">Binds 2 manganese ions per subunit.</text>
</comment>
<comment type="pathway">
    <text evidence="1">Carbohydrate degradation; glycolysis; pyruvate from D-glyceraldehyde 3-phosphate: step 3/5.</text>
</comment>
<comment type="subunit">
    <text evidence="1">Monomer.</text>
</comment>
<comment type="similarity">
    <text evidence="1">Belongs to the BPG-independent phosphoglycerate mutase family.</text>
</comment>
<proteinExistence type="inferred from homology"/>
<keyword id="KW-0324">Glycolysis</keyword>
<keyword id="KW-0413">Isomerase</keyword>
<keyword id="KW-0464">Manganese</keyword>
<keyword id="KW-0479">Metal-binding</keyword>
<dbReference type="EC" id="5.4.2.12" evidence="1"/>
<dbReference type="EMBL" id="CP000789">
    <property type="protein sequence ID" value="ABU69169.1"/>
    <property type="molecule type" value="Genomic_DNA"/>
</dbReference>
<dbReference type="RefSeq" id="WP_012126487.1">
    <property type="nucleotide sequence ID" value="NC_009783.1"/>
</dbReference>
<dbReference type="SMR" id="A7MX70"/>
<dbReference type="KEGG" id="vha:VIBHAR_00121"/>
<dbReference type="PATRIC" id="fig|338187.25.peg.2412"/>
<dbReference type="UniPathway" id="UPA00109">
    <property type="reaction ID" value="UER00186"/>
</dbReference>
<dbReference type="Proteomes" id="UP000008152">
    <property type="component" value="Chromosome I"/>
</dbReference>
<dbReference type="GO" id="GO:0005829">
    <property type="term" value="C:cytosol"/>
    <property type="evidence" value="ECO:0007669"/>
    <property type="project" value="TreeGrafter"/>
</dbReference>
<dbReference type="GO" id="GO:0030145">
    <property type="term" value="F:manganese ion binding"/>
    <property type="evidence" value="ECO:0007669"/>
    <property type="project" value="UniProtKB-UniRule"/>
</dbReference>
<dbReference type="GO" id="GO:0004619">
    <property type="term" value="F:phosphoglycerate mutase activity"/>
    <property type="evidence" value="ECO:0007669"/>
    <property type="project" value="UniProtKB-EC"/>
</dbReference>
<dbReference type="GO" id="GO:0006007">
    <property type="term" value="P:glucose catabolic process"/>
    <property type="evidence" value="ECO:0007669"/>
    <property type="project" value="InterPro"/>
</dbReference>
<dbReference type="GO" id="GO:0006096">
    <property type="term" value="P:glycolytic process"/>
    <property type="evidence" value="ECO:0007669"/>
    <property type="project" value="UniProtKB-UniRule"/>
</dbReference>
<dbReference type="CDD" id="cd16010">
    <property type="entry name" value="iPGM"/>
    <property type="match status" value="1"/>
</dbReference>
<dbReference type="FunFam" id="3.40.1450.10:FF:000001">
    <property type="entry name" value="2,3-bisphosphoglycerate-independent phosphoglycerate mutase"/>
    <property type="match status" value="1"/>
</dbReference>
<dbReference type="FunFam" id="3.40.720.10:FF:000001">
    <property type="entry name" value="2,3-bisphosphoglycerate-independent phosphoglycerate mutase"/>
    <property type="match status" value="1"/>
</dbReference>
<dbReference type="Gene3D" id="3.40.720.10">
    <property type="entry name" value="Alkaline Phosphatase, subunit A"/>
    <property type="match status" value="1"/>
</dbReference>
<dbReference type="Gene3D" id="3.40.1450.10">
    <property type="entry name" value="BPG-independent phosphoglycerate mutase, domain B"/>
    <property type="match status" value="1"/>
</dbReference>
<dbReference type="HAMAP" id="MF_01038">
    <property type="entry name" value="GpmI"/>
    <property type="match status" value="1"/>
</dbReference>
<dbReference type="InterPro" id="IPR017850">
    <property type="entry name" value="Alkaline_phosphatase_core_sf"/>
</dbReference>
<dbReference type="InterPro" id="IPR011258">
    <property type="entry name" value="BPG-indep_PGM_N"/>
</dbReference>
<dbReference type="InterPro" id="IPR006124">
    <property type="entry name" value="Metalloenzyme"/>
</dbReference>
<dbReference type="InterPro" id="IPR036646">
    <property type="entry name" value="PGAM_B_sf"/>
</dbReference>
<dbReference type="InterPro" id="IPR005995">
    <property type="entry name" value="Pgm_bpd_ind"/>
</dbReference>
<dbReference type="NCBIfam" id="TIGR01307">
    <property type="entry name" value="pgm_bpd_ind"/>
    <property type="match status" value="1"/>
</dbReference>
<dbReference type="NCBIfam" id="NF003897">
    <property type="entry name" value="PRK05434.1-5"/>
    <property type="match status" value="1"/>
</dbReference>
<dbReference type="PANTHER" id="PTHR31637">
    <property type="entry name" value="2,3-BISPHOSPHOGLYCERATE-INDEPENDENT PHOSPHOGLYCERATE MUTASE"/>
    <property type="match status" value="1"/>
</dbReference>
<dbReference type="PANTHER" id="PTHR31637:SF0">
    <property type="entry name" value="2,3-BISPHOSPHOGLYCERATE-INDEPENDENT PHOSPHOGLYCERATE MUTASE"/>
    <property type="match status" value="1"/>
</dbReference>
<dbReference type="Pfam" id="PF06415">
    <property type="entry name" value="iPGM_N"/>
    <property type="match status" value="1"/>
</dbReference>
<dbReference type="Pfam" id="PF01676">
    <property type="entry name" value="Metalloenzyme"/>
    <property type="match status" value="1"/>
</dbReference>
<dbReference type="PIRSF" id="PIRSF001492">
    <property type="entry name" value="IPGAM"/>
    <property type="match status" value="1"/>
</dbReference>
<dbReference type="SUPFAM" id="SSF64158">
    <property type="entry name" value="2,3-Bisphosphoglycerate-independent phosphoglycerate mutase, substrate-binding domain"/>
    <property type="match status" value="1"/>
</dbReference>
<dbReference type="SUPFAM" id="SSF53649">
    <property type="entry name" value="Alkaline phosphatase-like"/>
    <property type="match status" value="1"/>
</dbReference>
<gene>
    <name evidence="1" type="primary">gpmI</name>
    <name type="ordered locus">VIBHAR_00121</name>
</gene>
<feature type="chain" id="PRO_1000064017" description="2,3-bisphosphoglycerate-independent phosphoglycerate mutase">
    <location>
        <begin position="1"/>
        <end position="510"/>
    </location>
</feature>
<feature type="active site" description="Phosphoserine intermediate" evidence="1">
    <location>
        <position position="63"/>
    </location>
</feature>
<feature type="binding site" evidence="1">
    <location>
        <position position="13"/>
    </location>
    <ligand>
        <name>Mn(2+)</name>
        <dbReference type="ChEBI" id="CHEBI:29035"/>
        <label>2</label>
    </ligand>
</feature>
<feature type="binding site" evidence="1">
    <location>
        <position position="63"/>
    </location>
    <ligand>
        <name>Mn(2+)</name>
        <dbReference type="ChEBI" id="CHEBI:29035"/>
        <label>2</label>
    </ligand>
</feature>
<feature type="binding site" evidence="1">
    <location>
        <position position="124"/>
    </location>
    <ligand>
        <name>substrate</name>
    </ligand>
</feature>
<feature type="binding site" evidence="1">
    <location>
        <begin position="154"/>
        <end position="155"/>
    </location>
    <ligand>
        <name>substrate</name>
    </ligand>
</feature>
<feature type="binding site" evidence="1">
    <location>
        <position position="186"/>
    </location>
    <ligand>
        <name>substrate</name>
    </ligand>
</feature>
<feature type="binding site" evidence="1">
    <location>
        <position position="192"/>
    </location>
    <ligand>
        <name>substrate</name>
    </ligand>
</feature>
<feature type="binding site" evidence="1">
    <location>
        <begin position="262"/>
        <end position="265"/>
    </location>
    <ligand>
        <name>substrate</name>
    </ligand>
</feature>
<feature type="binding site" evidence="1">
    <location>
        <position position="334"/>
    </location>
    <ligand>
        <name>substrate</name>
    </ligand>
</feature>
<feature type="binding site" evidence="1">
    <location>
        <position position="401"/>
    </location>
    <ligand>
        <name>Mn(2+)</name>
        <dbReference type="ChEBI" id="CHEBI:29035"/>
        <label>1</label>
    </ligand>
</feature>
<feature type="binding site" evidence="1">
    <location>
        <position position="405"/>
    </location>
    <ligand>
        <name>Mn(2+)</name>
        <dbReference type="ChEBI" id="CHEBI:29035"/>
        <label>1</label>
    </ligand>
</feature>
<feature type="binding site" evidence="1">
    <location>
        <position position="442"/>
    </location>
    <ligand>
        <name>Mn(2+)</name>
        <dbReference type="ChEBI" id="CHEBI:29035"/>
        <label>2</label>
    </ligand>
</feature>
<feature type="binding site" evidence="1">
    <location>
        <position position="443"/>
    </location>
    <ligand>
        <name>Mn(2+)</name>
        <dbReference type="ChEBI" id="CHEBI:29035"/>
        <label>2</label>
    </ligand>
</feature>
<feature type="binding site" evidence="1">
    <location>
        <position position="461"/>
    </location>
    <ligand>
        <name>Mn(2+)</name>
        <dbReference type="ChEBI" id="CHEBI:29035"/>
        <label>1</label>
    </ligand>
</feature>